<keyword id="KW-0903">Direct protein sequencing</keyword>
<keyword id="KW-0964">Secreted</keyword>
<keyword id="KW-0732">Signal</keyword>
<reference evidence="5" key="1">
    <citation type="submission" date="2007-12" db="EMBL/GenBank/DDBJ databases">
        <title>DOE Joint Genome Institute Lottia gigantea EST project.</title>
        <authorList>
            <person name="Richardson P."/>
            <person name="Lucas S."/>
            <person name="Rokhsar D."/>
            <person name="Wang M."/>
            <person name="Lindquist E.A."/>
        </authorList>
    </citation>
    <scope>NUCLEOTIDE SEQUENCE [LARGE SCALE MRNA]</scope>
    <scope>IDENTIFICATION</scope>
    <source>
        <tissue evidence="4">Mantle</tissue>
    </source>
</reference>
<reference key="2">
    <citation type="journal article" date="2013" name="FEBS J.">
        <title>The shell-forming proteome of Lottia gigantea reveals both deep conservations and lineage-specific novelties.</title>
        <authorList>
            <person name="Marie B."/>
            <person name="Jackson D.J."/>
            <person name="Ramos-Silva P."/>
            <person name="Zanella-Cleon I."/>
            <person name="Guichard N."/>
            <person name="Marin F."/>
        </authorList>
    </citation>
    <scope>PROTEIN SEQUENCE OF 184-201 AND 230-246</scope>
    <scope>SUBCELLULAR LOCATION</scope>
    <scope>TISSUE SPECIFICITY</scope>
    <source>
        <tissue>Shell</tissue>
    </source>
</reference>
<name>MRP_LOTGI</name>
<comment type="subcellular location">
    <subcellularLocation>
        <location evidence="3">Secreted</location>
    </subcellularLocation>
</comment>
<comment type="tissue specificity">
    <text evidence="3">Component of the acid-soluble organic matrix of calcified layers of the shell (at protein level).</text>
</comment>
<proteinExistence type="evidence at protein level"/>
<evidence type="ECO:0000255" key="1"/>
<evidence type="ECO:0000256" key="2">
    <source>
        <dbReference type="SAM" id="MobiDB-lite"/>
    </source>
</evidence>
<evidence type="ECO:0000269" key="3">
    <source>
    </source>
</evidence>
<evidence type="ECO:0000269" key="4">
    <source ref="1"/>
</evidence>
<evidence type="ECO:0000305" key="5"/>
<sequence length="270" mass="29059">MLSLWAIGLLGLLNQVEALWSPSSYQSPAQQRSAQFSSSGWGTSPAAQNPWSFNRPMPNTNMPNMNTGSLPGSMPGAMPGSMPGAMPGSMPGAMPGSMPGSMPGSMPNAMPGAMPGGTGSGFMAGAMPGAMPNMRSSNNMMGNMRNGYPPSYMTPSPRNTICVAPVSQPRLCMVNGENTHKYRLKDVIEFLGHPNIEKVPKCVPGVPRVNCADYYAAQYIWKRGYCYCKNFHSNLPSYQMGSTQIRCVLNNCGACSQEFYVDKQRVVKCE</sequence>
<feature type="signal peptide" evidence="1">
    <location>
        <begin position="1"/>
        <end position="18"/>
    </location>
</feature>
<feature type="chain" id="PRO_0000415251" description="Methionine-rich protein" evidence="1">
    <location>
        <begin position="19"/>
        <end position="270"/>
    </location>
</feature>
<feature type="region of interest" description="Disordered" evidence="2">
    <location>
        <begin position="31"/>
        <end position="95"/>
    </location>
</feature>
<feature type="compositionally biased region" description="Polar residues" evidence="2">
    <location>
        <begin position="31"/>
        <end position="52"/>
    </location>
</feature>
<feature type="compositionally biased region" description="Low complexity" evidence="2">
    <location>
        <begin position="56"/>
        <end position="95"/>
    </location>
</feature>
<protein>
    <recommendedName>
        <fullName>Methionine-rich protein</fullName>
    </recommendedName>
    <alternativeName>
        <fullName>Uncharacterized shell protein 19</fullName>
        <shortName>LUSP-19</shortName>
    </alternativeName>
</protein>
<accession>B3A0R7</accession>
<dbReference type="EMBL" id="FC620142">
    <property type="status" value="NOT_ANNOTATED_CDS"/>
    <property type="molecule type" value="mRNA"/>
</dbReference>
<dbReference type="EMBL" id="FC624777">
    <property type="status" value="NOT_ANNOTATED_CDS"/>
    <property type="molecule type" value="mRNA"/>
</dbReference>
<dbReference type="GO" id="GO:0005576">
    <property type="term" value="C:extracellular region"/>
    <property type="evidence" value="ECO:0007669"/>
    <property type="project" value="UniProtKB-SubCell"/>
</dbReference>
<organism>
    <name type="scientific">Lottia gigantea</name>
    <name type="common">Giant owl limpet</name>
    <dbReference type="NCBI Taxonomy" id="225164"/>
    <lineage>
        <taxon>Eukaryota</taxon>
        <taxon>Metazoa</taxon>
        <taxon>Spiralia</taxon>
        <taxon>Lophotrochozoa</taxon>
        <taxon>Mollusca</taxon>
        <taxon>Gastropoda</taxon>
        <taxon>Patellogastropoda</taxon>
        <taxon>Lottioidea</taxon>
        <taxon>Lottiidae</taxon>
        <taxon>Lottia</taxon>
    </lineage>
</organism>